<comment type="function">
    <text evidence="2">Dioxygenase that catalyzes the first step of DNA base J (beta-d-glucosyl-HOMedU) biosynthesis by converting thymine to 5-hydroxymethyluracil (HOMedU). DNA base J is a hypermodified thymidine residue found in the genome of kinetoplastid parasites, which is localized primarily to repetitive DNA, namely the telomeres, and is implicated in the regulation of antigenic variation. Also specifically binds to base J-containing DNA (J-DNA). Involved in propagation and maintenance of DNA base J synthesis initiated by JBP2 by specifically binding already synthesized DNA base J and propagating J synthesis. Thymine dioxygenase activity and J-DNA-binding are independent functions (By similarity).</text>
</comment>
<comment type="catalytic activity">
    <reaction evidence="2">
        <text>thymine + 2-oxoglutarate + O2 = 5-hydroxymethyluracil + succinate + CO2</text>
        <dbReference type="Rhea" id="RHEA:10316"/>
        <dbReference type="ChEBI" id="CHEBI:15379"/>
        <dbReference type="ChEBI" id="CHEBI:16526"/>
        <dbReference type="ChEBI" id="CHEBI:16810"/>
        <dbReference type="ChEBI" id="CHEBI:16964"/>
        <dbReference type="ChEBI" id="CHEBI:17821"/>
        <dbReference type="ChEBI" id="CHEBI:30031"/>
        <dbReference type="EC" id="1.14.11.6"/>
    </reaction>
</comment>
<comment type="cofactor">
    <cofactor evidence="1">
        <name>Fe(2+)</name>
        <dbReference type="ChEBI" id="CHEBI:29033"/>
    </cofactor>
    <text evidence="1">Binds 1 Fe(2+) ion per subunit.</text>
</comment>
<comment type="subunit">
    <text evidence="2">Monomer. Binds to DNA as a monomer (By similarity).</text>
</comment>
<comment type="subcellular location">
    <subcellularLocation>
        <location evidence="2">Nucleus</location>
    </subcellularLocation>
</comment>
<comment type="domain">
    <text evidence="2">The DNA-binding JBP1 domain (DB-JBP1) is necessary and sufficient for binding to J-DNA.</text>
</comment>
<comment type="similarity">
    <text evidence="3">Belongs to the TET family. JBP1 subfamily.</text>
</comment>
<name>JBP1B_TRYCC</name>
<evidence type="ECO:0000250" key="1">
    <source>
        <dbReference type="UniProtKB" id="Q6N021"/>
    </source>
</evidence>
<evidence type="ECO:0000250" key="2">
    <source>
        <dbReference type="UniProtKB" id="Q9U6M1"/>
    </source>
</evidence>
<evidence type="ECO:0000305" key="3"/>
<dbReference type="EC" id="1.14.11.6" evidence="2"/>
<dbReference type="EMBL" id="AAHK01000343">
    <property type="protein sequence ID" value="EAN93526.1"/>
    <property type="molecule type" value="Genomic_DNA"/>
</dbReference>
<dbReference type="RefSeq" id="XP_815377.1">
    <property type="nucleotide sequence ID" value="XM_810284.1"/>
</dbReference>
<dbReference type="SMR" id="Q4DLX9"/>
<dbReference type="PaxDb" id="353153-Q4DLX9"/>
<dbReference type="EnsemblProtists" id="EAN93526">
    <property type="protein sequence ID" value="EAN93526"/>
    <property type="gene ID" value="Tc00.1047053506753.120"/>
</dbReference>
<dbReference type="GeneID" id="3547091"/>
<dbReference type="KEGG" id="tcr:506753.120"/>
<dbReference type="eggNOG" id="ENOG502RTYX">
    <property type="taxonomic scope" value="Eukaryota"/>
</dbReference>
<dbReference type="InParanoid" id="Q4DLX9"/>
<dbReference type="Proteomes" id="UP000002296">
    <property type="component" value="Unassembled WGS sequence"/>
</dbReference>
<dbReference type="GO" id="GO:0005634">
    <property type="term" value="C:nucleus"/>
    <property type="evidence" value="ECO:0007669"/>
    <property type="project" value="UniProtKB-SubCell"/>
</dbReference>
<dbReference type="GO" id="GO:0003677">
    <property type="term" value="F:DNA binding"/>
    <property type="evidence" value="ECO:0007669"/>
    <property type="project" value="UniProtKB-KW"/>
</dbReference>
<dbReference type="GO" id="GO:0046872">
    <property type="term" value="F:metal ion binding"/>
    <property type="evidence" value="ECO:0007669"/>
    <property type="project" value="UniProtKB-KW"/>
</dbReference>
<dbReference type="GO" id="GO:0050341">
    <property type="term" value="F:thymine dioxygenase activity"/>
    <property type="evidence" value="ECO:0007669"/>
    <property type="project" value="UniProtKB-EC"/>
</dbReference>
<dbReference type="GO" id="GO:0070580">
    <property type="term" value="P:base J metabolic process"/>
    <property type="evidence" value="ECO:0007669"/>
    <property type="project" value="UniProtKB-ARBA"/>
</dbReference>
<dbReference type="Gene3D" id="1.20.120.1440">
    <property type="entry name" value="JBP1, DNA-binding domain"/>
    <property type="match status" value="1"/>
</dbReference>
<dbReference type="InterPro" id="IPR024779">
    <property type="entry name" value="2OGFeDO_JBP1/TET_oxygenase_dom"/>
</dbReference>
<dbReference type="InterPro" id="IPR041241">
    <property type="entry name" value="DB_JBP1"/>
</dbReference>
<dbReference type="InterPro" id="IPR043111">
    <property type="entry name" value="DB_JBP1_sf"/>
</dbReference>
<dbReference type="Pfam" id="PF18526">
    <property type="entry name" value="DB_JBP1"/>
    <property type="match status" value="1"/>
</dbReference>
<dbReference type="Pfam" id="PF12851">
    <property type="entry name" value="Tet_JBP"/>
    <property type="match status" value="1"/>
</dbReference>
<sequence>MKQKRGKQDVKMVESAPPQLLPKKGRLEISELAPQQRTIRTAEEIEMAYNEAVRKHPFYDNADHTIDFHDATVFRDARGVVGGVLLPGALPAFAATMAADVLRPAAVRTSLRSNMFGGFAPLSGIAGYFDYRGSPVELKCRKTSFTYENVHSWPNVFPMIDYVSAIYKAVFPERWAAQDAAVPDIVRIHGSPFSTLTVNQQFRTASHTDAGDFDMGYGLLAVLEGKFEGLSLALDDFGVCFRMQPRDVLIFNTHFFHSNTEPELNHPKDDWSRLTCVCYYRAALGEPACVAEYERRLARAKEIGASPPPAVDAILQKDNGNNFNKPAPTFTYSLTPFGGAASICSLHCCTAKLLRLHELLLENPTLEVILFGESLRTDDGLPRREKEQLISVHLPVVVKMSPSGGFSELGGALKAAEEKQYFFEEKYLADELGPDLMSMWTQSRAHWLRLVKEDWERLCRRDPERTKFTWNNSSAMNAAFFDLCEVAKQMMIGLLNKETPSSAENHSFWILFAAHLNYACTTENGMPRDAVGMHKLNVKLKDFHFGGTRYLKDMPPEEQERRLERKKRIEEARRRGNAARETHTDNWLLNDTFDYQQEDRKVEFEENGWMTPEAYVKHLGLKPCGDVTAAASPTEPIHVLVVLPRPAAAAPKDVKRDVPLATSEESIRLLMNPAAQRVLTGKARNVTLPSPLSFGGVKITVLFDGDDIDCIHPDFVVLQHLLAAIEEDEAAKARVKYWAHVARYCVFVVETDVRDRRHFLLREEVRVAYEDVAEDCFRSLHAAAYSTKCNRLRTTPSLIALSNSKNIGLRFKFRGSPLNTIALIVVGERLD</sequence>
<feature type="chain" id="PRO_0000377557" description="Thymine dioxygenase JBP1-B">
    <location>
        <begin position="1"/>
        <end position="831"/>
    </location>
</feature>
<feature type="region of interest" description="Thymine dioxygenase" evidence="2">
    <location>
        <begin position="80"/>
        <end position="282"/>
    </location>
</feature>
<feature type="region of interest" description="DNA-binding JBP1 domain" evidence="2">
    <location>
        <begin position="409"/>
        <end position="578"/>
    </location>
</feature>
<feature type="binding site" evidence="1">
    <location>
        <position position="207"/>
    </location>
    <ligand>
        <name>Fe cation</name>
        <dbReference type="ChEBI" id="CHEBI:24875"/>
        <note>catalytic</note>
    </ligand>
</feature>
<feature type="binding site" evidence="1">
    <location>
        <position position="209"/>
    </location>
    <ligand>
        <name>Fe cation</name>
        <dbReference type="ChEBI" id="CHEBI:24875"/>
        <note>catalytic</note>
    </ligand>
</feature>
<feature type="binding site" evidence="1">
    <location>
        <position position="257"/>
    </location>
    <ligand>
        <name>Fe cation</name>
        <dbReference type="ChEBI" id="CHEBI:24875"/>
        <note>catalytic</note>
    </ligand>
</feature>
<feature type="binding site" evidence="1">
    <location>
        <position position="273"/>
    </location>
    <ligand>
        <name>2-oxoglutarate</name>
        <dbReference type="ChEBI" id="CHEBI:16810"/>
    </ligand>
</feature>
<feature type="site" description="Involved in J base recognition, conferring specificity towards J-DNA" evidence="2">
    <location>
        <position position="542"/>
    </location>
</feature>
<proteinExistence type="inferred from homology"/>
<reference key="1">
    <citation type="journal article" date="2005" name="Science">
        <title>The genome sequence of Trypanosoma cruzi, etiologic agent of Chagas disease.</title>
        <authorList>
            <person name="El-Sayed N.M.A."/>
            <person name="Myler P.J."/>
            <person name="Bartholomeu D.C."/>
            <person name="Nilsson D."/>
            <person name="Aggarwal G."/>
            <person name="Tran A.-N."/>
            <person name="Ghedin E."/>
            <person name="Worthey E.A."/>
            <person name="Delcher A.L."/>
            <person name="Blandin G."/>
            <person name="Westenberger S.J."/>
            <person name="Caler E."/>
            <person name="Cerqueira G.C."/>
            <person name="Branche C."/>
            <person name="Haas B."/>
            <person name="Anupama A."/>
            <person name="Arner E."/>
            <person name="Aslund L."/>
            <person name="Attipoe P."/>
            <person name="Bontempi E."/>
            <person name="Bringaud F."/>
            <person name="Burton P."/>
            <person name="Cadag E."/>
            <person name="Campbell D.A."/>
            <person name="Carrington M."/>
            <person name="Crabtree J."/>
            <person name="Darban H."/>
            <person name="da Silveira J.F."/>
            <person name="de Jong P."/>
            <person name="Edwards K."/>
            <person name="Englund P.T."/>
            <person name="Fazelina G."/>
            <person name="Feldblyum T."/>
            <person name="Ferella M."/>
            <person name="Frasch A.C."/>
            <person name="Gull K."/>
            <person name="Horn D."/>
            <person name="Hou L."/>
            <person name="Huang Y."/>
            <person name="Kindlund E."/>
            <person name="Klingbeil M."/>
            <person name="Kluge S."/>
            <person name="Koo H."/>
            <person name="Lacerda D."/>
            <person name="Levin M.J."/>
            <person name="Lorenzi H."/>
            <person name="Louie T."/>
            <person name="Machado C.R."/>
            <person name="McCulloch R."/>
            <person name="McKenna A."/>
            <person name="Mizuno Y."/>
            <person name="Mottram J.C."/>
            <person name="Nelson S."/>
            <person name="Ochaya S."/>
            <person name="Osoegawa K."/>
            <person name="Pai G."/>
            <person name="Parsons M."/>
            <person name="Pentony M."/>
            <person name="Pettersson U."/>
            <person name="Pop M."/>
            <person name="Ramirez J.L."/>
            <person name="Rinta J."/>
            <person name="Robertson L."/>
            <person name="Salzberg S.L."/>
            <person name="Sanchez D.O."/>
            <person name="Seyler A."/>
            <person name="Sharma R."/>
            <person name="Shetty J."/>
            <person name="Simpson A.J."/>
            <person name="Sisk E."/>
            <person name="Tammi M.T."/>
            <person name="Tarleton R."/>
            <person name="Teixeira S."/>
            <person name="Van Aken S."/>
            <person name="Vogt C."/>
            <person name="Ward P.N."/>
            <person name="Wickstead B."/>
            <person name="Wortman J."/>
            <person name="White O."/>
            <person name="Fraser C.M."/>
            <person name="Stuart K.D."/>
            <person name="Andersson B."/>
        </authorList>
    </citation>
    <scope>NUCLEOTIDE SEQUENCE [LARGE SCALE GENOMIC DNA]</scope>
    <source>
        <strain>CL Brener</strain>
    </source>
</reference>
<protein>
    <recommendedName>
        <fullName>Thymine dioxygenase JBP1-B</fullName>
        <ecNumber evidence="2">1.14.11.6</ecNumber>
    </recommendedName>
    <alternativeName>
        <fullName>J-binding protein 1B</fullName>
    </alternativeName>
    <alternativeName>
        <fullName>Thymidine hydroxylase JBP1-B</fullName>
    </alternativeName>
</protein>
<gene>
    <name type="primary">JBP1B</name>
    <name type="ORF">Tc00.1047053506753.120</name>
</gene>
<accession>Q4DLX9</accession>
<keyword id="KW-0223">Dioxygenase</keyword>
<keyword id="KW-0238">DNA-binding</keyword>
<keyword id="KW-0408">Iron</keyword>
<keyword id="KW-0479">Metal-binding</keyword>
<keyword id="KW-0539">Nucleus</keyword>
<keyword id="KW-0560">Oxidoreductase</keyword>
<keyword id="KW-1185">Reference proteome</keyword>
<organism>
    <name type="scientific">Trypanosoma cruzi (strain CL Brener)</name>
    <dbReference type="NCBI Taxonomy" id="353153"/>
    <lineage>
        <taxon>Eukaryota</taxon>
        <taxon>Discoba</taxon>
        <taxon>Euglenozoa</taxon>
        <taxon>Kinetoplastea</taxon>
        <taxon>Metakinetoplastina</taxon>
        <taxon>Trypanosomatida</taxon>
        <taxon>Trypanosomatidae</taxon>
        <taxon>Trypanosoma</taxon>
        <taxon>Schizotrypanum</taxon>
    </lineage>
</organism>